<dbReference type="EMBL" id="CP001600">
    <property type="protein sequence ID" value="ACR70721.1"/>
    <property type="molecule type" value="Genomic_DNA"/>
</dbReference>
<dbReference type="RefSeq" id="WP_012850030.1">
    <property type="nucleotide sequence ID" value="NZ_CP169062.1"/>
</dbReference>
<dbReference type="SMR" id="C5BGM4"/>
<dbReference type="STRING" id="67780.B6E78_09565"/>
<dbReference type="GeneID" id="72530000"/>
<dbReference type="KEGG" id="eic:NT01EI_3593"/>
<dbReference type="HOGENOM" id="CLU_041575_5_2_6"/>
<dbReference type="OrthoDB" id="9803201at2"/>
<dbReference type="Proteomes" id="UP000001485">
    <property type="component" value="Chromosome"/>
</dbReference>
<dbReference type="GO" id="GO:1990904">
    <property type="term" value="C:ribonucleoprotein complex"/>
    <property type="evidence" value="ECO:0007669"/>
    <property type="project" value="UniProtKB-KW"/>
</dbReference>
<dbReference type="GO" id="GO:0005840">
    <property type="term" value="C:ribosome"/>
    <property type="evidence" value="ECO:0007669"/>
    <property type="project" value="UniProtKB-KW"/>
</dbReference>
<dbReference type="GO" id="GO:0019843">
    <property type="term" value="F:rRNA binding"/>
    <property type="evidence" value="ECO:0007669"/>
    <property type="project" value="UniProtKB-UniRule"/>
</dbReference>
<dbReference type="GO" id="GO:0003735">
    <property type="term" value="F:structural constituent of ribosome"/>
    <property type="evidence" value="ECO:0007669"/>
    <property type="project" value="InterPro"/>
</dbReference>
<dbReference type="GO" id="GO:0006412">
    <property type="term" value="P:translation"/>
    <property type="evidence" value="ECO:0007669"/>
    <property type="project" value="UniProtKB-UniRule"/>
</dbReference>
<dbReference type="FunFam" id="3.40.1370.10:FF:000001">
    <property type="entry name" value="50S ribosomal protein L4"/>
    <property type="match status" value="1"/>
</dbReference>
<dbReference type="Gene3D" id="3.40.1370.10">
    <property type="match status" value="1"/>
</dbReference>
<dbReference type="HAMAP" id="MF_01328_B">
    <property type="entry name" value="Ribosomal_uL4_B"/>
    <property type="match status" value="1"/>
</dbReference>
<dbReference type="InterPro" id="IPR002136">
    <property type="entry name" value="Ribosomal_uL4"/>
</dbReference>
<dbReference type="InterPro" id="IPR013005">
    <property type="entry name" value="Ribosomal_uL4-like"/>
</dbReference>
<dbReference type="InterPro" id="IPR023574">
    <property type="entry name" value="Ribosomal_uL4_dom_sf"/>
</dbReference>
<dbReference type="NCBIfam" id="TIGR03953">
    <property type="entry name" value="rplD_bact"/>
    <property type="match status" value="1"/>
</dbReference>
<dbReference type="PANTHER" id="PTHR10746">
    <property type="entry name" value="50S RIBOSOMAL PROTEIN L4"/>
    <property type="match status" value="1"/>
</dbReference>
<dbReference type="PANTHER" id="PTHR10746:SF6">
    <property type="entry name" value="LARGE RIBOSOMAL SUBUNIT PROTEIN UL4M"/>
    <property type="match status" value="1"/>
</dbReference>
<dbReference type="Pfam" id="PF00573">
    <property type="entry name" value="Ribosomal_L4"/>
    <property type="match status" value="1"/>
</dbReference>
<dbReference type="SUPFAM" id="SSF52166">
    <property type="entry name" value="Ribosomal protein L4"/>
    <property type="match status" value="1"/>
</dbReference>
<organism>
    <name type="scientific">Edwardsiella ictaluri (strain 93-146)</name>
    <dbReference type="NCBI Taxonomy" id="634503"/>
    <lineage>
        <taxon>Bacteria</taxon>
        <taxon>Pseudomonadati</taxon>
        <taxon>Pseudomonadota</taxon>
        <taxon>Gammaproteobacteria</taxon>
        <taxon>Enterobacterales</taxon>
        <taxon>Hafniaceae</taxon>
        <taxon>Edwardsiella</taxon>
    </lineage>
</organism>
<gene>
    <name evidence="1" type="primary">rplD</name>
    <name type="ordered locus">NT01EI_3593</name>
</gene>
<keyword id="KW-0687">Ribonucleoprotein</keyword>
<keyword id="KW-0689">Ribosomal protein</keyword>
<keyword id="KW-0694">RNA-binding</keyword>
<keyword id="KW-0699">rRNA-binding</keyword>
<feature type="chain" id="PRO_1000214570" description="Large ribosomal subunit protein uL4">
    <location>
        <begin position="1"/>
        <end position="201"/>
    </location>
</feature>
<feature type="region of interest" description="Disordered" evidence="2">
    <location>
        <begin position="44"/>
        <end position="71"/>
    </location>
</feature>
<evidence type="ECO:0000255" key="1">
    <source>
        <dbReference type="HAMAP-Rule" id="MF_01328"/>
    </source>
</evidence>
<evidence type="ECO:0000256" key="2">
    <source>
        <dbReference type="SAM" id="MobiDB-lite"/>
    </source>
</evidence>
<evidence type="ECO:0000305" key="3"/>
<name>RL4_EDWI9</name>
<reference key="1">
    <citation type="submission" date="2009-03" db="EMBL/GenBank/DDBJ databases">
        <title>Complete genome sequence of Edwardsiella ictaluri 93-146.</title>
        <authorList>
            <person name="Williams M.L."/>
            <person name="Gillaspy A.F."/>
            <person name="Dyer D.W."/>
            <person name="Thune R.L."/>
            <person name="Waldbieser G.C."/>
            <person name="Schuster S.C."/>
            <person name="Gipson J."/>
            <person name="Zaitshik J."/>
            <person name="Landry C."/>
            <person name="Lawrence M.L."/>
        </authorList>
    </citation>
    <scope>NUCLEOTIDE SEQUENCE [LARGE SCALE GENOMIC DNA]</scope>
    <source>
        <strain>93-146</strain>
    </source>
</reference>
<sequence>MELVLKDAQSALTVSETTFGRDFNEALVHQVVVAYAAGARQGTRAQKTRAEVTGSGKKPWRQKGTGRARSGSIKSPIWRSGGVTFAARPQDHSQKVNKKMYRGALKSILSELVRQDRLIVVEKFSVEAPKTKLLAQKLKDMALDDVLIVTSEVDENLFLAARNLFKVDVRDVAGIDPVSLIAFDKVVMTADAVKQVEEMLA</sequence>
<comment type="function">
    <text evidence="1">One of the primary rRNA binding proteins, this protein initially binds near the 5'-end of the 23S rRNA. It is important during the early stages of 50S assembly. It makes multiple contacts with different domains of the 23S rRNA in the assembled 50S subunit and ribosome.</text>
</comment>
<comment type="function">
    <text evidence="1">Forms part of the polypeptide exit tunnel.</text>
</comment>
<comment type="subunit">
    <text evidence="1">Part of the 50S ribosomal subunit.</text>
</comment>
<comment type="similarity">
    <text evidence="1">Belongs to the universal ribosomal protein uL4 family.</text>
</comment>
<accession>C5BGM4</accession>
<protein>
    <recommendedName>
        <fullName evidence="1">Large ribosomal subunit protein uL4</fullName>
    </recommendedName>
    <alternativeName>
        <fullName evidence="3">50S ribosomal protein L4</fullName>
    </alternativeName>
</protein>
<proteinExistence type="inferred from homology"/>